<feature type="chain" id="PRO_0000125056" description="Large ribosomal subunit protein uL5">
    <location>
        <begin position="1"/>
        <end position="190"/>
    </location>
</feature>
<proteinExistence type="inferred from homology"/>
<gene>
    <name evidence="1" type="primary">rpl5</name>
    <name type="ordered locus">MJ0469</name>
</gene>
<organism>
    <name type="scientific">Methanocaldococcus jannaschii (strain ATCC 43067 / DSM 2661 / JAL-1 / JCM 10045 / NBRC 100440)</name>
    <name type="common">Methanococcus jannaschii</name>
    <dbReference type="NCBI Taxonomy" id="243232"/>
    <lineage>
        <taxon>Archaea</taxon>
        <taxon>Methanobacteriati</taxon>
        <taxon>Methanobacteriota</taxon>
        <taxon>Methanomada group</taxon>
        <taxon>Methanococci</taxon>
        <taxon>Methanococcales</taxon>
        <taxon>Methanocaldococcaceae</taxon>
        <taxon>Methanocaldococcus</taxon>
    </lineage>
</organism>
<name>RL5_METJA</name>
<comment type="function">
    <text evidence="1">This is one of the proteins that bind and probably mediate the attachment of the 5S RNA into the large ribosomal subunit, where it forms part of the central protuberance. In the 70S ribosome it contacts protein S13 of the 30S subunit (bridge B1b), connecting the 2 subunits; this bridge is implicated in subunit movement. May contact the P site tRNA; the 5S rRNA and some of its associated proteins might help stabilize positioning of ribosome-bound tRNAs.</text>
</comment>
<comment type="subunit">
    <text evidence="1">Part of the 50S ribosomal subunit; contacts the 5S rRNA and probably tRNA. Forms a bridge to the 30S subunit in the 70S ribosome.</text>
</comment>
<comment type="similarity">
    <text evidence="1">Belongs to the universal ribosomal protein uL5 family.</text>
</comment>
<sequence length="190" mass="22169">MSFEELWQKNPMLKPRIEKVVVNFGVGESGDRLTKGAQVIEELTGQKPIRTRAKQTNPSFGIRKKLPIGLKVTLRGKKAEEFLKNAFEAFQKEGKKLYDYSFDDYGNFSFGIHEHIDFPGQKYDPMIGIFGMDVCVTLERPGFRVKRRKRCRAKIPRRHRLTREEAIEFIEKTFGVKVERVLLEEEEETQ</sequence>
<evidence type="ECO:0000255" key="1">
    <source>
        <dbReference type="HAMAP-Rule" id="MF_01333"/>
    </source>
</evidence>
<evidence type="ECO:0000305" key="2"/>
<dbReference type="EMBL" id="L77117">
    <property type="protein sequence ID" value="AAB98458.1"/>
    <property type="molecule type" value="Genomic_DNA"/>
</dbReference>
<dbReference type="PIR" id="E64358">
    <property type="entry name" value="E64358"/>
</dbReference>
<dbReference type="RefSeq" id="WP_010869969.1">
    <property type="nucleotide sequence ID" value="NC_000909.1"/>
</dbReference>
<dbReference type="SMR" id="P54040"/>
<dbReference type="FunCoup" id="P54040">
    <property type="interactions" value="159"/>
</dbReference>
<dbReference type="STRING" id="243232.MJ_0469"/>
<dbReference type="PaxDb" id="243232-MJ_0469"/>
<dbReference type="EnsemblBacteria" id="AAB98458">
    <property type="protein sequence ID" value="AAB98458"/>
    <property type="gene ID" value="MJ_0469"/>
</dbReference>
<dbReference type="GeneID" id="8805614"/>
<dbReference type="KEGG" id="mja:MJ_0469"/>
<dbReference type="eggNOG" id="arCOG04092">
    <property type="taxonomic scope" value="Archaea"/>
</dbReference>
<dbReference type="HOGENOM" id="CLU_061015_3_0_2"/>
<dbReference type="InParanoid" id="P54040"/>
<dbReference type="OrthoDB" id="372044at2157"/>
<dbReference type="PhylomeDB" id="P54040"/>
<dbReference type="Proteomes" id="UP000000805">
    <property type="component" value="Chromosome"/>
</dbReference>
<dbReference type="GO" id="GO:0022625">
    <property type="term" value="C:cytosolic large ribosomal subunit"/>
    <property type="evidence" value="ECO:0000318"/>
    <property type="project" value="GO_Central"/>
</dbReference>
<dbReference type="GO" id="GO:0003723">
    <property type="term" value="F:RNA binding"/>
    <property type="evidence" value="ECO:0000318"/>
    <property type="project" value="GO_Central"/>
</dbReference>
<dbReference type="GO" id="GO:0019843">
    <property type="term" value="F:rRNA binding"/>
    <property type="evidence" value="ECO:0007669"/>
    <property type="project" value="UniProtKB-UniRule"/>
</dbReference>
<dbReference type="GO" id="GO:0003735">
    <property type="term" value="F:structural constituent of ribosome"/>
    <property type="evidence" value="ECO:0000318"/>
    <property type="project" value="GO_Central"/>
</dbReference>
<dbReference type="GO" id="GO:0000049">
    <property type="term" value="F:tRNA binding"/>
    <property type="evidence" value="ECO:0007669"/>
    <property type="project" value="UniProtKB-UniRule"/>
</dbReference>
<dbReference type="GO" id="GO:0006412">
    <property type="term" value="P:translation"/>
    <property type="evidence" value="ECO:0000318"/>
    <property type="project" value="GO_Central"/>
</dbReference>
<dbReference type="FunFam" id="3.30.1440.10:FF:000002">
    <property type="entry name" value="60S ribosomal protein L11"/>
    <property type="match status" value="1"/>
</dbReference>
<dbReference type="Gene3D" id="3.30.1440.10">
    <property type="match status" value="1"/>
</dbReference>
<dbReference type="HAMAP" id="MF_01333_A">
    <property type="entry name" value="Ribosomal_uL5_A"/>
    <property type="match status" value="1"/>
</dbReference>
<dbReference type="InterPro" id="IPR002132">
    <property type="entry name" value="Ribosomal_uL5"/>
</dbReference>
<dbReference type="InterPro" id="IPR022804">
    <property type="entry name" value="Ribosomal_uL5_arc"/>
</dbReference>
<dbReference type="InterPro" id="IPR031309">
    <property type="entry name" value="Ribosomal_uL5_C"/>
</dbReference>
<dbReference type="InterPro" id="IPR020929">
    <property type="entry name" value="Ribosomal_uL5_CS"/>
</dbReference>
<dbReference type="InterPro" id="IPR022803">
    <property type="entry name" value="Ribosomal_uL5_dom_sf"/>
</dbReference>
<dbReference type="InterPro" id="IPR031310">
    <property type="entry name" value="Ribosomal_uL5_N"/>
</dbReference>
<dbReference type="NCBIfam" id="NF003258">
    <property type="entry name" value="PRK04219.1"/>
    <property type="match status" value="1"/>
</dbReference>
<dbReference type="PANTHER" id="PTHR11994">
    <property type="entry name" value="60S RIBOSOMAL PROTEIN L11-RELATED"/>
    <property type="match status" value="1"/>
</dbReference>
<dbReference type="Pfam" id="PF00281">
    <property type="entry name" value="Ribosomal_L5"/>
    <property type="match status" value="1"/>
</dbReference>
<dbReference type="Pfam" id="PF00673">
    <property type="entry name" value="Ribosomal_L5_C"/>
    <property type="match status" value="1"/>
</dbReference>
<dbReference type="PIRSF" id="PIRSF002161">
    <property type="entry name" value="Ribosomal_L5"/>
    <property type="match status" value="1"/>
</dbReference>
<dbReference type="SUPFAM" id="SSF55282">
    <property type="entry name" value="RL5-like"/>
    <property type="match status" value="1"/>
</dbReference>
<dbReference type="PROSITE" id="PS00358">
    <property type="entry name" value="RIBOSOMAL_L5"/>
    <property type="match status" value="1"/>
</dbReference>
<protein>
    <recommendedName>
        <fullName evidence="1">Large ribosomal subunit protein uL5</fullName>
    </recommendedName>
    <alternativeName>
        <fullName evidence="2">50S ribosomal protein L5</fullName>
    </alternativeName>
</protein>
<accession>P54040</accession>
<reference key="1">
    <citation type="journal article" date="1996" name="Science">
        <title>Complete genome sequence of the methanogenic archaeon, Methanococcus jannaschii.</title>
        <authorList>
            <person name="Bult C.J."/>
            <person name="White O."/>
            <person name="Olsen G.J."/>
            <person name="Zhou L."/>
            <person name="Fleischmann R.D."/>
            <person name="Sutton G.G."/>
            <person name="Blake J.A."/>
            <person name="FitzGerald L.M."/>
            <person name="Clayton R.A."/>
            <person name="Gocayne J.D."/>
            <person name="Kerlavage A.R."/>
            <person name="Dougherty B.A."/>
            <person name="Tomb J.-F."/>
            <person name="Adams M.D."/>
            <person name="Reich C.I."/>
            <person name="Overbeek R."/>
            <person name="Kirkness E.F."/>
            <person name="Weinstock K.G."/>
            <person name="Merrick J.M."/>
            <person name="Glodek A."/>
            <person name="Scott J.L."/>
            <person name="Geoghagen N.S.M."/>
            <person name="Weidman J.F."/>
            <person name="Fuhrmann J.L."/>
            <person name="Nguyen D."/>
            <person name="Utterback T.R."/>
            <person name="Kelley J.M."/>
            <person name="Peterson J.D."/>
            <person name="Sadow P.W."/>
            <person name="Hanna M.C."/>
            <person name="Cotton M.D."/>
            <person name="Roberts K.M."/>
            <person name="Hurst M.A."/>
            <person name="Kaine B.P."/>
            <person name="Borodovsky M."/>
            <person name="Klenk H.-P."/>
            <person name="Fraser C.M."/>
            <person name="Smith H.O."/>
            <person name="Woese C.R."/>
            <person name="Venter J.C."/>
        </authorList>
    </citation>
    <scope>NUCLEOTIDE SEQUENCE [LARGE SCALE GENOMIC DNA]</scope>
    <source>
        <strain>ATCC 43067 / DSM 2661 / JAL-1 / JCM 10045 / NBRC 100440</strain>
    </source>
</reference>
<keyword id="KW-1185">Reference proteome</keyword>
<keyword id="KW-0687">Ribonucleoprotein</keyword>
<keyword id="KW-0689">Ribosomal protein</keyword>
<keyword id="KW-0694">RNA-binding</keyword>
<keyword id="KW-0699">rRNA-binding</keyword>
<keyword id="KW-0820">tRNA-binding</keyword>